<reference key="1">
    <citation type="journal article" date="2005" name="J. Bacteriol.">
        <title>Swine and poultry pathogens: the complete genome sequences of two strains of Mycoplasma hyopneumoniae and a strain of Mycoplasma synoviae.</title>
        <authorList>
            <person name="Vasconcelos A.T.R."/>
            <person name="Ferreira H.B."/>
            <person name="Bizarro C.V."/>
            <person name="Bonatto S.L."/>
            <person name="Carvalho M.O."/>
            <person name="Pinto P.M."/>
            <person name="Almeida D.F."/>
            <person name="Almeida L.G.P."/>
            <person name="Almeida R."/>
            <person name="Alves-Junior L."/>
            <person name="Assuncao E.N."/>
            <person name="Azevedo V.A.C."/>
            <person name="Bogo M.R."/>
            <person name="Brigido M.M."/>
            <person name="Brocchi M."/>
            <person name="Burity H.A."/>
            <person name="Camargo A.A."/>
            <person name="Camargo S.S."/>
            <person name="Carepo M.S."/>
            <person name="Carraro D.M."/>
            <person name="de Mattos Cascardo J.C."/>
            <person name="Castro L.A."/>
            <person name="Cavalcanti G."/>
            <person name="Chemale G."/>
            <person name="Collevatti R.G."/>
            <person name="Cunha C.W."/>
            <person name="Dallagiovanna B."/>
            <person name="Dambros B.P."/>
            <person name="Dellagostin O.A."/>
            <person name="Falcao C."/>
            <person name="Fantinatti-Garboggini F."/>
            <person name="Felipe M.S.S."/>
            <person name="Fiorentin L."/>
            <person name="Franco G.R."/>
            <person name="Freitas N.S.A."/>
            <person name="Frias D."/>
            <person name="Grangeiro T.B."/>
            <person name="Grisard E.C."/>
            <person name="Guimaraes C.T."/>
            <person name="Hungria M."/>
            <person name="Jardim S.N."/>
            <person name="Krieger M.A."/>
            <person name="Laurino J.P."/>
            <person name="Lima L.F.A."/>
            <person name="Lopes M.I."/>
            <person name="Loreto E.L.S."/>
            <person name="Madeira H.M.F."/>
            <person name="Manfio G.P."/>
            <person name="Maranhao A.Q."/>
            <person name="Martinkovics C.T."/>
            <person name="Medeiros S.R.B."/>
            <person name="Moreira M.A.M."/>
            <person name="Neiva M."/>
            <person name="Ramalho-Neto C.E."/>
            <person name="Nicolas M.F."/>
            <person name="Oliveira S.C."/>
            <person name="Paixao R.F.C."/>
            <person name="Pedrosa F.O."/>
            <person name="Pena S.D.J."/>
            <person name="Pereira M."/>
            <person name="Pereira-Ferrari L."/>
            <person name="Piffer I."/>
            <person name="Pinto L.S."/>
            <person name="Potrich D.P."/>
            <person name="Salim A.C.M."/>
            <person name="Santos F.R."/>
            <person name="Schmitt R."/>
            <person name="Schneider M.P.C."/>
            <person name="Schrank A."/>
            <person name="Schrank I.S."/>
            <person name="Schuck A.F."/>
            <person name="Seuanez H.N."/>
            <person name="Silva D.W."/>
            <person name="Silva R."/>
            <person name="Silva S.C."/>
            <person name="Soares C.M.A."/>
            <person name="Souza K.R.L."/>
            <person name="Souza R.C."/>
            <person name="Staats C.C."/>
            <person name="Steffens M.B.R."/>
            <person name="Teixeira S.M.R."/>
            <person name="Urmenyi T.P."/>
            <person name="Vainstein M.H."/>
            <person name="Zuccherato L.W."/>
            <person name="Simpson A.J.G."/>
            <person name="Zaha A."/>
        </authorList>
    </citation>
    <scope>NUCLEOTIDE SEQUENCE [LARGE SCALE GENOMIC DNA]</scope>
    <source>
        <strain>53</strain>
    </source>
</reference>
<gene>
    <name evidence="1" type="primary">tig</name>
    <name type="ordered locus">MS53_0603</name>
</gene>
<dbReference type="EC" id="5.2.1.8" evidence="1"/>
<dbReference type="EMBL" id="AE017245">
    <property type="protein sequence ID" value="AAZ44010.2"/>
    <property type="molecule type" value="Genomic_DNA"/>
</dbReference>
<dbReference type="RefSeq" id="WP_041352110.1">
    <property type="nucleotide sequence ID" value="NC_007294.1"/>
</dbReference>
<dbReference type="SMR" id="Q4A5G1"/>
<dbReference type="STRING" id="262723.MS53_0603"/>
<dbReference type="KEGG" id="msy:MS53_0603"/>
<dbReference type="eggNOG" id="COG0544">
    <property type="taxonomic scope" value="Bacteria"/>
</dbReference>
<dbReference type="HOGENOM" id="CLU_033058_3_2_14"/>
<dbReference type="OrthoDB" id="9767721at2"/>
<dbReference type="Proteomes" id="UP000000549">
    <property type="component" value="Chromosome"/>
</dbReference>
<dbReference type="GO" id="GO:0005737">
    <property type="term" value="C:cytoplasm"/>
    <property type="evidence" value="ECO:0007669"/>
    <property type="project" value="UniProtKB-SubCell"/>
</dbReference>
<dbReference type="GO" id="GO:0003755">
    <property type="term" value="F:peptidyl-prolyl cis-trans isomerase activity"/>
    <property type="evidence" value="ECO:0007669"/>
    <property type="project" value="UniProtKB-UniRule"/>
</dbReference>
<dbReference type="GO" id="GO:0051301">
    <property type="term" value="P:cell division"/>
    <property type="evidence" value="ECO:0007669"/>
    <property type="project" value="UniProtKB-KW"/>
</dbReference>
<dbReference type="GO" id="GO:0006457">
    <property type="term" value="P:protein folding"/>
    <property type="evidence" value="ECO:0007669"/>
    <property type="project" value="UniProtKB-UniRule"/>
</dbReference>
<dbReference type="GO" id="GO:0015031">
    <property type="term" value="P:protein transport"/>
    <property type="evidence" value="ECO:0007669"/>
    <property type="project" value="UniProtKB-UniRule"/>
</dbReference>
<dbReference type="FunFam" id="3.10.50.40:FF:000001">
    <property type="entry name" value="Trigger factor"/>
    <property type="match status" value="1"/>
</dbReference>
<dbReference type="Gene3D" id="3.10.50.40">
    <property type="match status" value="1"/>
</dbReference>
<dbReference type="Gene3D" id="3.30.70.1050">
    <property type="entry name" value="Trigger factor ribosome-binding domain"/>
    <property type="match status" value="1"/>
</dbReference>
<dbReference type="Gene3D" id="1.10.3120.10">
    <property type="entry name" value="Trigger factor, C-terminal domain"/>
    <property type="match status" value="1"/>
</dbReference>
<dbReference type="HAMAP" id="MF_00303">
    <property type="entry name" value="Trigger_factor_Tig"/>
    <property type="match status" value="1"/>
</dbReference>
<dbReference type="InterPro" id="IPR046357">
    <property type="entry name" value="PPIase_dom_sf"/>
</dbReference>
<dbReference type="InterPro" id="IPR001179">
    <property type="entry name" value="PPIase_FKBP_dom"/>
</dbReference>
<dbReference type="InterPro" id="IPR005215">
    <property type="entry name" value="Trig_fac"/>
</dbReference>
<dbReference type="InterPro" id="IPR008880">
    <property type="entry name" value="Trigger_fac_C"/>
</dbReference>
<dbReference type="InterPro" id="IPR037041">
    <property type="entry name" value="Trigger_fac_C_sf"/>
</dbReference>
<dbReference type="InterPro" id="IPR008881">
    <property type="entry name" value="Trigger_fac_ribosome-bd_bac"/>
</dbReference>
<dbReference type="InterPro" id="IPR036611">
    <property type="entry name" value="Trigger_fac_ribosome-bd_sf"/>
</dbReference>
<dbReference type="InterPro" id="IPR027304">
    <property type="entry name" value="Trigger_fact/SurA_dom_sf"/>
</dbReference>
<dbReference type="NCBIfam" id="TIGR00115">
    <property type="entry name" value="tig"/>
    <property type="match status" value="1"/>
</dbReference>
<dbReference type="Pfam" id="PF00254">
    <property type="entry name" value="FKBP_C"/>
    <property type="match status" value="1"/>
</dbReference>
<dbReference type="Pfam" id="PF05698">
    <property type="entry name" value="Trigger_C"/>
    <property type="match status" value="1"/>
</dbReference>
<dbReference type="Pfam" id="PF05697">
    <property type="entry name" value="Trigger_N"/>
    <property type="match status" value="1"/>
</dbReference>
<dbReference type="PIRSF" id="PIRSF003095">
    <property type="entry name" value="Trigger_factor"/>
    <property type="match status" value="1"/>
</dbReference>
<dbReference type="SUPFAM" id="SSF54534">
    <property type="entry name" value="FKBP-like"/>
    <property type="match status" value="1"/>
</dbReference>
<dbReference type="SUPFAM" id="SSF109998">
    <property type="entry name" value="Triger factor/SurA peptide-binding domain-like"/>
    <property type="match status" value="1"/>
</dbReference>
<dbReference type="SUPFAM" id="SSF102735">
    <property type="entry name" value="Trigger factor ribosome-binding domain"/>
    <property type="match status" value="1"/>
</dbReference>
<dbReference type="PROSITE" id="PS50059">
    <property type="entry name" value="FKBP_PPIASE"/>
    <property type="match status" value="1"/>
</dbReference>
<feature type="chain" id="PRO_0000256578" description="Trigger factor">
    <location>
        <begin position="1"/>
        <end position="462"/>
    </location>
</feature>
<feature type="domain" description="PPIase FKBP-type" evidence="1">
    <location>
        <begin position="163"/>
        <end position="248"/>
    </location>
</feature>
<feature type="region of interest" description="Disordered" evidence="2">
    <location>
        <begin position="442"/>
        <end position="462"/>
    </location>
</feature>
<feature type="compositionally biased region" description="Basic and acidic residues" evidence="2">
    <location>
        <begin position="452"/>
        <end position="462"/>
    </location>
</feature>
<organism>
    <name type="scientific">Mycoplasmopsis synoviae (strain 53)</name>
    <name type="common">Mycoplasma synoviae</name>
    <dbReference type="NCBI Taxonomy" id="262723"/>
    <lineage>
        <taxon>Bacteria</taxon>
        <taxon>Bacillati</taxon>
        <taxon>Mycoplasmatota</taxon>
        <taxon>Mycoplasmoidales</taxon>
        <taxon>Metamycoplasmataceae</taxon>
        <taxon>Mycoplasmopsis</taxon>
    </lineage>
</organism>
<proteinExistence type="inferred from homology"/>
<name>TIG_MYCS5</name>
<protein>
    <recommendedName>
        <fullName evidence="1">Trigger factor</fullName>
        <shortName evidence="1">TF</shortName>
        <ecNumber evidence="1">5.2.1.8</ecNumber>
    </recommendedName>
    <alternativeName>
        <fullName evidence="1">PPIase</fullName>
    </alternativeName>
</protein>
<comment type="function">
    <text evidence="1">Involved in protein export. Acts as a chaperone by maintaining the newly synthesized protein in an open conformation. Functions as a peptidyl-prolyl cis-trans isomerase.</text>
</comment>
<comment type="catalytic activity">
    <reaction evidence="1">
        <text>[protein]-peptidylproline (omega=180) = [protein]-peptidylproline (omega=0)</text>
        <dbReference type="Rhea" id="RHEA:16237"/>
        <dbReference type="Rhea" id="RHEA-COMP:10747"/>
        <dbReference type="Rhea" id="RHEA-COMP:10748"/>
        <dbReference type="ChEBI" id="CHEBI:83833"/>
        <dbReference type="ChEBI" id="CHEBI:83834"/>
        <dbReference type="EC" id="5.2.1.8"/>
    </reaction>
</comment>
<comment type="subcellular location">
    <subcellularLocation>
        <location>Cytoplasm</location>
    </subcellularLocation>
    <text evidence="1">About half TF is bound to the ribosome near the polypeptide exit tunnel while the other half is free in the cytoplasm.</text>
</comment>
<comment type="domain">
    <text evidence="1">Consists of 3 domains; the N-terminus binds the ribosome, the middle domain has PPIase activity, while the C-terminus has intrinsic chaperone activity on its own.</text>
</comment>
<comment type="similarity">
    <text evidence="1">Belongs to the FKBP-type PPIase family. Tig subfamily.</text>
</comment>
<evidence type="ECO:0000255" key="1">
    <source>
        <dbReference type="HAMAP-Rule" id="MF_00303"/>
    </source>
</evidence>
<evidence type="ECO:0000256" key="2">
    <source>
        <dbReference type="SAM" id="MobiDB-lite"/>
    </source>
</evidence>
<sequence length="462" mass="53932">MSDFKFTNTETELVVSLFVSKEQVDKEYQKLETEALKKIKVNGYRAGKAPKEALRARLNSKDLLDRVLQNLSKENLNEVYKQLMERKEPVTFAYTIDLKEKENGFTFDYKFAKVPTVSDLDVKSAKTELKLEKVTDKDVLESIETRLNEGRSRVKVEDEAKKGDEVLFDFKGYIDGEAFEGGEAEDYSLVLGSAQFIAGFEEQLLGKKAGWKGEIKATFPSTYYVKNYRDKEATFEINLKEVRRVNSLKLDSKEFKDSPLGSEEYLGQYKVFVKKDLVVSRFIQSQRDFLDELVKELSQSVKFHISDLLLKEKIAQLDKQFNDQLKQYKVKRKEYLEVIKATEEDIQVELKTSAVNEYKLSYIYQELLKEFKKEFTEEEKKQYQEVFDALKFTSPSNDLLDQLAVLEGLLEKTSRTKELKAWNDYKVYLVEELKKLDKEIQSMQEKQTQEPAEEKVETKEEK</sequence>
<accession>Q4A5G1</accession>
<keyword id="KW-0131">Cell cycle</keyword>
<keyword id="KW-0132">Cell division</keyword>
<keyword id="KW-0143">Chaperone</keyword>
<keyword id="KW-0963">Cytoplasm</keyword>
<keyword id="KW-0413">Isomerase</keyword>
<keyword id="KW-1185">Reference proteome</keyword>
<keyword id="KW-0697">Rotamase</keyword>